<evidence type="ECO:0000255" key="1">
    <source>
        <dbReference type="HAMAP-Rule" id="MF_00171"/>
    </source>
</evidence>
<name>TRUA_NITWN</name>
<comment type="function">
    <text evidence="1">Formation of pseudouridine at positions 38, 39 and 40 in the anticodon stem and loop of transfer RNAs.</text>
</comment>
<comment type="catalytic activity">
    <reaction evidence="1">
        <text>uridine(38/39/40) in tRNA = pseudouridine(38/39/40) in tRNA</text>
        <dbReference type="Rhea" id="RHEA:22376"/>
        <dbReference type="Rhea" id="RHEA-COMP:10085"/>
        <dbReference type="Rhea" id="RHEA-COMP:10087"/>
        <dbReference type="ChEBI" id="CHEBI:65314"/>
        <dbReference type="ChEBI" id="CHEBI:65315"/>
        <dbReference type="EC" id="5.4.99.12"/>
    </reaction>
</comment>
<comment type="subunit">
    <text evidence="1">Homodimer.</text>
</comment>
<comment type="similarity">
    <text evidence="1">Belongs to the tRNA pseudouridine synthase TruA family.</text>
</comment>
<reference key="1">
    <citation type="journal article" date="2006" name="Appl. Environ. Microbiol.">
        <title>Genome sequence of the chemolithoautotrophic nitrite-oxidizing bacterium Nitrobacter winogradskyi Nb-255.</title>
        <authorList>
            <person name="Starkenburg S.R."/>
            <person name="Chain P.S.G."/>
            <person name="Sayavedra-Soto L.A."/>
            <person name="Hauser L."/>
            <person name="Land M.L."/>
            <person name="Larimer F.W."/>
            <person name="Malfatti S.A."/>
            <person name="Klotz M.G."/>
            <person name="Bottomley P.J."/>
            <person name="Arp D.J."/>
            <person name="Hickey W.J."/>
        </authorList>
    </citation>
    <scope>NUCLEOTIDE SEQUENCE [LARGE SCALE GENOMIC DNA]</scope>
    <source>
        <strain>ATCC 25391 / DSM 10237 / CIP 104748 / NCIMB 11846 / Nb-255</strain>
    </source>
</reference>
<accession>Q3SN27</accession>
<keyword id="KW-0413">Isomerase</keyword>
<keyword id="KW-1185">Reference proteome</keyword>
<keyword id="KW-0819">tRNA processing</keyword>
<protein>
    <recommendedName>
        <fullName evidence="1">tRNA pseudouridine synthase A</fullName>
        <ecNumber evidence="1">5.4.99.12</ecNumber>
    </recommendedName>
    <alternativeName>
        <fullName evidence="1">tRNA pseudouridine(38-40) synthase</fullName>
    </alternativeName>
    <alternativeName>
        <fullName evidence="1">tRNA pseudouridylate synthase I</fullName>
    </alternativeName>
    <alternativeName>
        <fullName evidence="1">tRNA-uridine isomerase I</fullName>
    </alternativeName>
</protein>
<gene>
    <name evidence="1" type="primary">truA</name>
    <name type="ordered locus">Nwi_3066</name>
</gene>
<organism>
    <name type="scientific">Nitrobacter winogradskyi (strain ATCC 25391 / DSM 10237 / CIP 104748 / NCIMB 11846 / Nb-255)</name>
    <dbReference type="NCBI Taxonomy" id="323098"/>
    <lineage>
        <taxon>Bacteria</taxon>
        <taxon>Pseudomonadati</taxon>
        <taxon>Pseudomonadota</taxon>
        <taxon>Alphaproteobacteria</taxon>
        <taxon>Hyphomicrobiales</taxon>
        <taxon>Nitrobacteraceae</taxon>
        <taxon>Nitrobacter</taxon>
    </lineage>
</organism>
<feature type="chain" id="PRO_1000017125" description="tRNA pseudouridine synthase A">
    <location>
        <begin position="1"/>
        <end position="255"/>
    </location>
</feature>
<feature type="active site" description="Nucleophile" evidence="1">
    <location>
        <position position="52"/>
    </location>
</feature>
<feature type="binding site" evidence="1">
    <location>
        <position position="111"/>
    </location>
    <ligand>
        <name>substrate</name>
    </ligand>
</feature>
<dbReference type="EC" id="5.4.99.12" evidence="1"/>
<dbReference type="EMBL" id="CP000115">
    <property type="protein sequence ID" value="ABA06314.1"/>
    <property type="molecule type" value="Genomic_DNA"/>
</dbReference>
<dbReference type="RefSeq" id="WP_011316230.1">
    <property type="nucleotide sequence ID" value="NC_007406.1"/>
</dbReference>
<dbReference type="SMR" id="Q3SN27"/>
<dbReference type="STRING" id="323098.Nwi_3066"/>
<dbReference type="KEGG" id="nwi:Nwi_3066"/>
<dbReference type="eggNOG" id="COG0101">
    <property type="taxonomic scope" value="Bacteria"/>
</dbReference>
<dbReference type="HOGENOM" id="CLU_014673_0_2_5"/>
<dbReference type="OrthoDB" id="9811823at2"/>
<dbReference type="Proteomes" id="UP000002531">
    <property type="component" value="Chromosome"/>
</dbReference>
<dbReference type="GO" id="GO:0003723">
    <property type="term" value="F:RNA binding"/>
    <property type="evidence" value="ECO:0007669"/>
    <property type="project" value="InterPro"/>
</dbReference>
<dbReference type="GO" id="GO:0160147">
    <property type="term" value="F:tRNA pseudouridine(38-40) synthase activity"/>
    <property type="evidence" value="ECO:0007669"/>
    <property type="project" value="UniProtKB-EC"/>
</dbReference>
<dbReference type="GO" id="GO:0031119">
    <property type="term" value="P:tRNA pseudouridine synthesis"/>
    <property type="evidence" value="ECO:0007669"/>
    <property type="project" value="UniProtKB-UniRule"/>
</dbReference>
<dbReference type="CDD" id="cd02570">
    <property type="entry name" value="PseudoU_synth_EcTruA"/>
    <property type="match status" value="1"/>
</dbReference>
<dbReference type="FunFam" id="3.30.70.580:FF:000001">
    <property type="entry name" value="tRNA pseudouridine synthase A"/>
    <property type="match status" value="1"/>
</dbReference>
<dbReference type="Gene3D" id="3.30.70.660">
    <property type="entry name" value="Pseudouridine synthase I, catalytic domain, C-terminal subdomain"/>
    <property type="match status" value="1"/>
</dbReference>
<dbReference type="Gene3D" id="3.30.70.580">
    <property type="entry name" value="Pseudouridine synthase I, catalytic domain, N-terminal subdomain"/>
    <property type="match status" value="1"/>
</dbReference>
<dbReference type="HAMAP" id="MF_00171">
    <property type="entry name" value="TruA"/>
    <property type="match status" value="1"/>
</dbReference>
<dbReference type="InterPro" id="IPR020103">
    <property type="entry name" value="PsdUridine_synth_cat_dom_sf"/>
</dbReference>
<dbReference type="InterPro" id="IPR001406">
    <property type="entry name" value="PsdUridine_synth_TruA"/>
</dbReference>
<dbReference type="InterPro" id="IPR020097">
    <property type="entry name" value="PsdUridine_synth_TruA_a/b_dom"/>
</dbReference>
<dbReference type="InterPro" id="IPR020095">
    <property type="entry name" value="PsdUridine_synth_TruA_C"/>
</dbReference>
<dbReference type="InterPro" id="IPR020094">
    <property type="entry name" value="TruA/RsuA/RluB/E/F_N"/>
</dbReference>
<dbReference type="NCBIfam" id="TIGR00071">
    <property type="entry name" value="hisT_truA"/>
    <property type="match status" value="1"/>
</dbReference>
<dbReference type="PANTHER" id="PTHR11142">
    <property type="entry name" value="PSEUDOURIDYLATE SYNTHASE"/>
    <property type="match status" value="1"/>
</dbReference>
<dbReference type="PANTHER" id="PTHR11142:SF0">
    <property type="entry name" value="TRNA PSEUDOURIDINE SYNTHASE-LIKE 1"/>
    <property type="match status" value="1"/>
</dbReference>
<dbReference type="Pfam" id="PF01416">
    <property type="entry name" value="PseudoU_synth_1"/>
    <property type="match status" value="2"/>
</dbReference>
<dbReference type="PIRSF" id="PIRSF001430">
    <property type="entry name" value="tRNA_psdUrid_synth"/>
    <property type="match status" value="1"/>
</dbReference>
<dbReference type="SUPFAM" id="SSF55120">
    <property type="entry name" value="Pseudouridine synthase"/>
    <property type="match status" value="1"/>
</dbReference>
<sequence>MPRYKLTIEYDGGPFCGWQYQTNGPSVQGALEAAVKAICGDDVRVHGAGRTDAGVHALAQVAHCDIARHFMPDRLRDGLNAHLRPHPIGVLEAEIVPDSFEARFSARRRHYIYRIANRRANLAIDVGRVWRVPRPLDTEAMHAAAQRLLGKHDFTTFRDTECQAKSPEKTLDQLDVIRNGDNVSIITSARSYLHSQVRSMVGSLVWVGHGRWNADDLSGALAARRREACGPVAPPDGLYLARVDYEGSIPLRQDR</sequence>
<proteinExistence type="inferred from homology"/>